<accession>Q4FFP4</accession>
<accession>A9LYI0</accession>
<feature type="initiator methionine" description="Removed" evidence="1">
    <location>
        <position position="1"/>
    </location>
</feature>
<feature type="chain" id="PRO_0000359615" description="Photosystem II D2 protein">
    <location>
        <begin position="2"/>
        <end position="353"/>
    </location>
</feature>
<feature type="transmembrane region" description="Helical" evidence="2">
    <location>
        <begin position="41"/>
        <end position="61"/>
    </location>
</feature>
<feature type="transmembrane region" description="Helical" evidence="2">
    <location>
        <begin position="125"/>
        <end position="141"/>
    </location>
</feature>
<feature type="transmembrane region" description="Helical" evidence="2">
    <location>
        <begin position="153"/>
        <end position="166"/>
    </location>
</feature>
<feature type="transmembrane region" description="Helical" evidence="2">
    <location>
        <begin position="208"/>
        <end position="228"/>
    </location>
</feature>
<feature type="transmembrane region" description="Helical" evidence="2">
    <location>
        <begin position="279"/>
        <end position="295"/>
    </location>
</feature>
<feature type="binding site" description="axial binding residue" evidence="2">
    <location>
        <position position="118"/>
    </location>
    <ligand>
        <name>chlorophyll a</name>
        <dbReference type="ChEBI" id="CHEBI:58416"/>
        <label>ChlzD2</label>
    </ligand>
    <ligandPart>
        <name>Mg</name>
        <dbReference type="ChEBI" id="CHEBI:25107"/>
    </ligandPart>
</feature>
<feature type="binding site" evidence="2">
    <location>
        <position position="130"/>
    </location>
    <ligand>
        <name>pheophytin a</name>
        <dbReference type="ChEBI" id="CHEBI:136840"/>
        <label>D2</label>
    </ligand>
</feature>
<feature type="binding site" evidence="2">
    <location>
        <position position="143"/>
    </location>
    <ligand>
        <name>pheophytin a</name>
        <dbReference type="ChEBI" id="CHEBI:136840"/>
        <label>D2</label>
    </ligand>
</feature>
<feature type="binding site" description="axial binding residue" evidence="2">
    <location>
        <position position="198"/>
    </location>
    <ligand>
        <name>chlorophyll a</name>
        <dbReference type="ChEBI" id="CHEBI:58416"/>
        <label>PD2</label>
    </ligand>
    <ligandPart>
        <name>Mg</name>
        <dbReference type="ChEBI" id="CHEBI:25107"/>
    </ligandPart>
</feature>
<feature type="binding site" evidence="2">
    <location>
        <position position="215"/>
    </location>
    <ligand>
        <name>a plastoquinone</name>
        <dbReference type="ChEBI" id="CHEBI:17757"/>
        <label>Q(A)</label>
    </ligand>
</feature>
<feature type="binding site" evidence="2">
    <location>
        <position position="215"/>
    </location>
    <ligand>
        <name>Fe cation</name>
        <dbReference type="ChEBI" id="CHEBI:24875"/>
        <note>ligand shared with heterodimeric partner</note>
    </ligand>
</feature>
<feature type="binding site" evidence="2">
    <location>
        <position position="262"/>
    </location>
    <ligand>
        <name>a plastoquinone</name>
        <dbReference type="ChEBI" id="CHEBI:17757"/>
        <label>Q(A)</label>
    </ligand>
</feature>
<feature type="binding site" evidence="2">
    <location>
        <position position="269"/>
    </location>
    <ligand>
        <name>Fe cation</name>
        <dbReference type="ChEBI" id="CHEBI:24875"/>
        <note>ligand shared with heterodimeric partner</note>
    </ligand>
</feature>
<feature type="modified residue" description="N-acetylthreonine" evidence="1">
    <location>
        <position position="2"/>
    </location>
</feature>
<feature type="modified residue" description="Phosphothreonine" evidence="1">
    <location>
        <position position="2"/>
    </location>
</feature>
<protein>
    <recommendedName>
        <fullName evidence="2">Photosystem II D2 protein</fullName>
        <shortName evidence="2">PSII D2 protein</shortName>
        <ecNumber evidence="2">1.10.3.9</ecNumber>
    </recommendedName>
    <alternativeName>
        <fullName evidence="2">Photosystem Q(A) protein</fullName>
    </alternativeName>
</protein>
<evidence type="ECO:0000250" key="1">
    <source>
        <dbReference type="UniProtKB" id="P56761"/>
    </source>
</evidence>
<evidence type="ECO:0000255" key="2">
    <source>
        <dbReference type="HAMAP-Rule" id="MF_01383"/>
    </source>
</evidence>
<comment type="function">
    <text evidence="2">Photosystem II (PSII) is a light-driven water:plastoquinone oxidoreductase that uses light energy to abstract electrons from H(2)O, generating O(2) and a proton gradient subsequently used for ATP formation. It consists of a core antenna complex that captures photons, and an electron transfer chain that converts photonic excitation into a charge separation. The D1/D2 (PsbA/PsbD) reaction center heterodimer binds P680, the primary electron donor of PSII as well as several subsequent electron acceptors. D2 is needed for assembly of a stable PSII complex.</text>
</comment>
<comment type="catalytic activity">
    <reaction evidence="2">
        <text>2 a plastoquinone + 4 hnu + 2 H2O = 2 a plastoquinol + O2</text>
        <dbReference type="Rhea" id="RHEA:36359"/>
        <dbReference type="Rhea" id="RHEA-COMP:9561"/>
        <dbReference type="Rhea" id="RHEA-COMP:9562"/>
        <dbReference type="ChEBI" id="CHEBI:15377"/>
        <dbReference type="ChEBI" id="CHEBI:15379"/>
        <dbReference type="ChEBI" id="CHEBI:17757"/>
        <dbReference type="ChEBI" id="CHEBI:30212"/>
        <dbReference type="ChEBI" id="CHEBI:62192"/>
        <dbReference type="EC" id="1.10.3.9"/>
    </reaction>
</comment>
<comment type="cofactor">
    <text evidence="2">The D1/D2 heterodimer binds P680, chlorophylls that are the primary electron donor of PSII, and subsequent electron acceptors. It shares a non-heme iron and each subunit binds pheophytin, quinone, additional chlorophylls, carotenoids and lipids. There is also a Cl(-1) ion associated with D1 and D2, which is required for oxygen evolution. The PSII complex binds additional chlorophylls, carotenoids and specific lipids.</text>
</comment>
<comment type="subunit">
    <text evidence="2">PSII is composed of 1 copy each of membrane proteins PsbA, PsbB, PsbC, PsbD, PsbE, PsbF, PsbH, PsbI, PsbJ, PsbK, PsbL, PsbM, PsbT, PsbX, PsbY, PsbZ, Psb30/Ycf12, at least 3 peripheral proteins of the oxygen-evolving complex and a large number of cofactors. It forms dimeric complexes.</text>
</comment>
<comment type="subcellular location">
    <subcellularLocation>
        <location evidence="2">Plastid</location>
        <location evidence="2">Chloroplast thylakoid membrane</location>
        <topology evidence="2">Multi-pass membrane protein</topology>
    </subcellularLocation>
</comment>
<comment type="miscellaneous">
    <text evidence="2">2 of the reaction center chlorophylls (ChlD1 and ChlD2) are entirely coordinated by water.</text>
</comment>
<comment type="similarity">
    <text evidence="2">Belongs to the reaction center PufL/M/PsbA/D family.</text>
</comment>
<proteinExistence type="inferred from homology"/>
<geneLocation type="chloroplast"/>
<name>PSBD_ACOCI</name>
<reference key="1">
    <citation type="journal article" date="2005" name="Mol. Biol. Evol.">
        <title>Identifying the basal angiosperm node in chloroplast genome phylogenies: sampling one's way out of the Felsenstein zone.</title>
        <authorList>
            <person name="Leebens-Mack J."/>
            <person name="Raubeson L.A."/>
            <person name="Cui L."/>
            <person name="Kuehl J.V."/>
            <person name="Fourcade M.H."/>
            <person name="Chumley T.W."/>
            <person name="Boore J.L."/>
            <person name="Jansen R.K."/>
            <person name="dePamphilis C.W."/>
        </authorList>
    </citation>
    <scope>NUCLEOTIDE SEQUENCE [GENOMIC DNA]</scope>
</reference>
<reference key="2">
    <citation type="submission" date="2007-11" db="EMBL/GenBank/DDBJ databases">
        <title>The complete chloroplast genome of Acorus americanus.</title>
        <authorList>
            <person name="Peery R.M."/>
            <person name="Chumley T.W."/>
            <person name="Kuehl J.V."/>
            <person name="Boore J.L."/>
            <person name="Raubeson L.A."/>
        </authorList>
    </citation>
    <scope>NUCLEOTIDE SEQUENCE [LARGE SCALE GENOMIC DNA]</scope>
</reference>
<sequence length="353" mass="39592">MTIALGRFTKEENDLFDIMDDWLRRDRFVFVGWSGLLLFPCAYFALGGWFTGTTFVTSWYTHGLASSYLEGCNFLTAAVSTPANSLAHSLLLLWGPEAQGDFTRWCQLGGLWTFVALHGAFGLIGFMLRQFELARSVQLRPYNAIAFSGPIAVFVSVFLIYPLGQSGWFFAPSFGVAAIFRFILFFQGFHNWTLNPFHMMGVAGVLGAALLCAIHGATVENTLFEDGDGANTFRAFNPTQAEETYSMVTANRFWSQIFGVAFSNKRWLHFFMLFVPVTGLWMSALGVVGLALNLRAYDFVSQEIRAAEDPEFETFYTKNILLNEGIRAWMAAQDQPHENLIFPEEVLPRGNAL</sequence>
<dbReference type="EC" id="1.10.3.9" evidence="2"/>
<dbReference type="EMBL" id="DQ069637">
    <property type="protein sequence ID" value="AAZ04069.1"/>
    <property type="molecule type" value="Genomic_DNA"/>
</dbReference>
<dbReference type="EMBL" id="EU273602">
    <property type="protein sequence ID" value="ABX38739.1"/>
    <property type="molecule type" value="Genomic_DNA"/>
</dbReference>
<dbReference type="RefSeq" id="YP_001586177.1">
    <property type="nucleotide sequence ID" value="NC_010093.1"/>
</dbReference>
<dbReference type="SMR" id="Q4FFP4"/>
<dbReference type="GeneID" id="5777738"/>
<dbReference type="GO" id="GO:0009535">
    <property type="term" value="C:chloroplast thylakoid membrane"/>
    <property type="evidence" value="ECO:0007669"/>
    <property type="project" value="UniProtKB-SubCell"/>
</dbReference>
<dbReference type="GO" id="GO:0009523">
    <property type="term" value="C:photosystem II"/>
    <property type="evidence" value="ECO:0007669"/>
    <property type="project" value="UniProtKB-KW"/>
</dbReference>
<dbReference type="GO" id="GO:0016168">
    <property type="term" value="F:chlorophyll binding"/>
    <property type="evidence" value="ECO:0007669"/>
    <property type="project" value="UniProtKB-UniRule"/>
</dbReference>
<dbReference type="GO" id="GO:0045156">
    <property type="term" value="F:electron transporter, transferring electrons within the cyclic electron transport pathway of photosynthesis activity"/>
    <property type="evidence" value="ECO:0007669"/>
    <property type="project" value="InterPro"/>
</dbReference>
<dbReference type="GO" id="GO:0005506">
    <property type="term" value="F:iron ion binding"/>
    <property type="evidence" value="ECO:0007669"/>
    <property type="project" value="UniProtKB-UniRule"/>
</dbReference>
<dbReference type="GO" id="GO:0010242">
    <property type="term" value="F:oxygen evolving activity"/>
    <property type="evidence" value="ECO:0007669"/>
    <property type="project" value="UniProtKB-EC"/>
</dbReference>
<dbReference type="GO" id="GO:0009772">
    <property type="term" value="P:photosynthetic electron transport in photosystem II"/>
    <property type="evidence" value="ECO:0007669"/>
    <property type="project" value="InterPro"/>
</dbReference>
<dbReference type="CDD" id="cd09288">
    <property type="entry name" value="Photosystem-II_D2"/>
    <property type="match status" value="1"/>
</dbReference>
<dbReference type="FunFam" id="1.20.85.10:FF:000001">
    <property type="entry name" value="photosystem II D2 protein-like"/>
    <property type="match status" value="1"/>
</dbReference>
<dbReference type="Gene3D" id="1.20.85.10">
    <property type="entry name" value="Photosystem II protein D1-like"/>
    <property type="match status" value="1"/>
</dbReference>
<dbReference type="HAMAP" id="MF_01383">
    <property type="entry name" value="PSII_PsbD_D2"/>
    <property type="match status" value="1"/>
</dbReference>
<dbReference type="InterPro" id="IPR055266">
    <property type="entry name" value="D1/D2"/>
</dbReference>
<dbReference type="InterPro" id="IPR036854">
    <property type="entry name" value="Photo_II_D1/D2_sf"/>
</dbReference>
<dbReference type="InterPro" id="IPR000484">
    <property type="entry name" value="Photo_RC_L/M"/>
</dbReference>
<dbReference type="InterPro" id="IPR055265">
    <property type="entry name" value="Photo_RC_L/M_CS"/>
</dbReference>
<dbReference type="InterPro" id="IPR005868">
    <property type="entry name" value="PSII_PsbD/D2"/>
</dbReference>
<dbReference type="NCBIfam" id="TIGR01152">
    <property type="entry name" value="psbD"/>
    <property type="match status" value="1"/>
</dbReference>
<dbReference type="PANTHER" id="PTHR33149:SF12">
    <property type="entry name" value="PHOTOSYSTEM II D2 PROTEIN"/>
    <property type="match status" value="1"/>
</dbReference>
<dbReference type="PANTHER" id="PTHR33149">
    <property type="entry name" value="PHOTOSYSTEM II PROTEIN D1"/>
    <property type="match status" value="1"/>
</dbReference>
<dbReference type="Pfam" id="PF00124">
    <property type="entry name" value="Photo_RC"/>
    <property type="match status" value="1"/>
</dbReference>
<dbReference type="PRINTS" id="PR00256">
    <property type="entry name" value="REACTNCENTRE"/>
</dbReference>
<dbReference type="SUPFAM" id="SSF81483">
    <property type="entry name" value="Bacterial photosystem II reaction centre, L and M subunits"/>
    <property type="match status" value="1"/>
</dbReference>
<dbReference type="PROSITE" id="PS00244">
    <property type="entry name" value="REACTION_CENTER"/>
    <property type="match status" value="1"/>
</dbReference>
<gene>
    <name evidence="2" type="primary">psbD</name>
</gene>
<keyword id="KW-0007">Acetylation</keyword>
<keyword id="KW-0148">Chlorophyll</keyword>
<keyword id="KW-0150">Chloroplast</keyword>
<keyword id="KW-0157">Chromophore</keyword>
<keyword id="KW-0249">Electron transport</keyword>
<keyword id="KW-0408">Iron</keyword>
<keyword id="KW-0460">Magnesium</keyword>
<keyword id="KW-0472">Membrane</keyword>
<keyword id="KW-0479">Metal-binding</keyword>
<keyword id="KW-0560">Oxidoreductase</keyword>
<keyword id="KW-0597">Phosphoprotein</keyword>
<keyword id="KW-0602">Photosynthesis</keyword>
<keyword id="KW-0604">Photosystem II</keyword>
<keyword id="KW-0934">Plastid</keyword>
<keyword id="KW-0793">Thylakoid</keyword>
<keyword id="KW-0812">Transmembrane</keyword>
<keyword id="KW-1133">Transmembrane helix</keyword>
<keyword id="KW-0813">Transport</keyword>
<organism>
    <name type="scientific">Acorus calamus var. americanus</name>
    <name type="common">American sweet flag</name>
    <name type="synonym">Acorus americanus</name>
    <dbReference type="NCBI Taxonomy" id="263995"/>
    <lineage>
        <taxon>Eukaryota</taxon>
        <taxon>Viridiplantae</taxon>
        <taxon>Streptophyta</taxon>
        <taxon>Embryophyta</taxon>
        <taxon>Tracheophyta</taxon>
        <taxon>Spermatophyta</taxon>
        <taxon>Magnoliopsida</taxon>
        <taxon>Liliopsida</taxon>
        <taxon>Acoraceae</taxon>
        <taxon>Acorus</taxon>
    </lineage>
</organism>